<sequence length="446" mass="50294">MKRKDDDQEDRSCSSASKLDPIPLDLKMATVPTKSHMKKSHQNKLEEDEKEDTNPSKLELDSLPLDLKMAILTRIPAKSLMKLRCVSKMWSSIIRSRGFIDSYYAISSKQSRFIVGLSNAAFNEPEKQLTFLFSFSHEDGEKSSSSSLVPNFEMAVPCSLAGLSHSLASFHGILAVEGKVMCNPNTEQFTTLPVGTIFVGYDPIDDQYKALGFDFDKRCHGNAIGHKVWTLGGGEGMRQIRGDLAPYRPILLPNVCINGVIYYGAHTLSQTKDPVIVCFDVRSEKLSFITAPAVVLQSGMKSILIDYKGKLASIVRNSCGGCISSFVFWILEDPKKHEWSRQSCDFPYSLWDYVGNVRICFFGTNKAGEIIIAPMFLSRDVRSFYIFYYNVETKTMRRVRLRGIGSDIEFRRSYGSENKLCNCHVRIAHQHVESIAFLKDHINLRT</sequence>
<dbReference type="EMBL" id="AC017118">
    <property type="protein sequence ID" value="AAF25966.1"/>
    <property type="molecule type" value="Genomic_DNA"/>
</dbReference>
<dbReference type="EMBL" id="CP002684">
    <property type="protein sequence ID" value="AEE31515.1"/>
    <property type="molecule type" value="Genomic_DNA"/>
</dbReference>
<dbReference type="PIR" id="H86451">
    <property type="entry name" value="H86451"/>
</dbReference>
<dbReference type="RefSeq" id="NP_174543.1">
    <property type="nucleotide sequence ID" value="NM_103000.1"/>
</dbReference>
<dbReference type="SMR" id="Q9LPJ7"/>
<dbReference type="iPTMnet" id="Q9LPJ7"/>
<dbReference type="PaxDb" id="3702-AT1G32660.1"/>
<dbReference type="ProteomicsDB" id="222478"/>
<dbReference type="EnsemblPlants" id="AT1G32660.1">
    <property type="protein sequence ID" value="AT1G32660.1"/>
    <property type="gene ID" value="AT1G32660"/>
</dbReference>
<dbReference type="GeneID" id="840160"/>
<dbReference type="Gramene" id="AT1G32660.1">
    <property type="protein sequence ID" value="AT1G32660.1"/>
    <property type="gene ID" value="AT1G32660"/>
</dbReference>
<dbReference type="KEGG" id="ath:AT1G32660"/>
<dbReference type="Araport" id="AT1G32660"/>
<dbReference type="TAIR" id="AT1G32660"/>
<dbReference type="eggNOG" id="ENOG502S9E8">
    <property type="taxonomic scope" value="Eukaryota"/>
</dbReference>
<dbReference type="HOGENOM" id="CLU_027176_8_0_1"/>
<dbReference type="InParanoid" id="Q9LPJ7"/>
<dbReference type="OMA" id="FWILEDP"/>
<dbReference type="PhylomeDB" id="Q9LPJ7"/>
<dbReference type="PRO" id="PR:Q9LPJ7"/>
<dbReference type="Proteomes" id="UP000006548">
    <property type="component" value="Chromosome 1"/>
</dbReference>
<dbReference type="ExpressionAtlas" id="Q9LPJ7">
    <property type="expression patterns" value="baseline and differential"/>
</dbReference>
<dbReference type="CDD" id="cd22157">
    <property type="entry name" value="F-box_AtFBW1-like"/>
    <property type="match status" value="1"/>
</dbReference>
<dbReference type="InterPro" id="IPR013187">
    <property type="entry name" value="F-box-assoc_dom_typ3"/>
</dbReference>
<dbReference type="InterPro" id="IPR017451">
    <property type="entry name" value="F-box-assoc_interact_dom"/>
</dbReference>
<dbReference type="InterPro" id="IPR036047">
    <property type="entry name" value="F-box-like_dom_sf"/>
</dbReference>
<dbReference type="InterPro" id="IPR001810">
    <property type="entry name" value="F-box_dom"/>
</dbReference>
<dbReference type="NCBIfam" id="TIGR01640">
    <property type="entry name" value="F_box_assoc_1"/>
    <property type="match status" value="1"/>
</dbReference>
<dbReference type="PANTHER" id="PTHR31111">
    <property type="entry name" value="BNAA05G37150D PROTEIN-RELATED"/>
    <property type="match status" value="1"/>
</dbReference>
<dbReference type="PANTHER" id="PTHR31111:SF111">
    <property type="entry name" value="F-BOX DOMAIN-CONTAINING PROTEIN"/>
    <property type="match status" value="1"/>
</dbReference>
<dbReference type="Pfam" id="PF00646">
    <property type="entry name" value="F-box"/>
    <property type="match status" value="1"/>
</dbReference>
<dbReference type="Pfam" id="PF08268">
    <property type="entry name" value="FBA_3"/>
    <property type="match status" value="1"/>
</dbReference>
<dbReference type="SMART" id="SM00256">
    <property type="entry name" value="FBOX"/>
    <property type="match status" value="1"/>
</dbReference>
<dbReference type="SUPFAM" id="SSF81383">
    <property type="entry name" value="F-box domain"/>
    <property type="match status" value="1"/>
</dbReference>
<dbReference type="PROSITE" id="PS50181">
    <property type="entry name" value="FBOX"/>
    <property type="match status" value="1"/>
</dbReference>
<accession>Q9LPJ7</accession>
<organism>
    <name type="scientific">Arabidopsis thaliana</name>
    <name type="common">Mouse-ear cress</name>
    <dbReference type="NCBI Taxonomy" id="3702"/>
    <lineage>
        <taxon>Eukaryota</taxon>
        <taxon>Viridiplantae</taxon>
        <taxon>Streptophyta</taxon>
        <taxon>Embryophyta</taxon>
        <taxon>Tracheophyta</taxon>
        <taxon>Spermatophyta</taxon>
        <taxon>Magnoliopsida</taxon>
        <taxon>eudicotyledons</taxon>
        <taxon>Gunneridae</taxon>
        <taxon>Pentapetalae</taxon>
        <taxon>rosids</taxon>
        <taxon>malvids</taxon>
        <taxon>Brassicales</taxon>
        <taxon>Brassicaceae</taxon>
        <taxon>Camelineae</taxon>
        <taxon>Arabidopsis</taxon>
    </lineage>
</organism>
<keyword id="KW-1185">Reference proteome</keyword>
<evidence type="ECO:0000255" key="1">
    <source>
        <dbReference type="PROSITE-ProRule" id="PRU00080"/>
    </source>
</evidence>
<evidence type="ECO:0000256" key="2">
    <source>
        <dbReference type="SAM" id="MobiDB-lite"/>
    </source>
</evidence>
<name>FB31_ARATH</name>
<feature type="chain" id="PRO_0000283307" description="Putative F-box protein At1g32660">
    <location>
        <begin position="1"/>
        <end position="446"/>
    </location>
</feature>
<feature type="domain" description="F-box" evidence="1">
    <location>
        <begin position="57"/>
        <end position="107"/>
    </location>
</feature>
<feature type="region of interest" description="Disordered" evidence="2">
    <location>
        <begin position="1"/>
        <end position="57"/>
    </location>
</feature>
<feature type="compositionally biased region" description="Basic and acidic residues" evidence="2">
    <location>
        <begin position="1"/>
        <end position="12"/>
    </location>
</feature>
<feature type="compositionally biased region" description="Basic and acidic residues" evidence="2">
    <location>
        <begin position="43"/>
        <end position="57"/>
    </location>
</feature>
<reference key="1">
    <citation type="journal article" date="2000" name="Nature">
        <title>Sequence and analysis of chromosome 1 of the plant Arabidopsis thaliana.</title>
        <authorList>
            <person name="Theologis A."/>
            <person name="Ecker J.R."/>
            <person name="Palm C.J."/>
            <person name="Federspiel N.A."/>
            <person name="Kaul S."/>
            <person name="White O."/>
            <person name="Alonso J."/>
            <person name="Altafi H."/>
            <person name="Araujo R."/>
            <person name="Bowman C.L."/>
            <person name="Brooks S.Y."/>
            <person name="Buehler E."/>
            <person name="Chan A."/>
            <person name="Chao Q."/>
            <person name="Chen H."/>
            <person name="Cheuk R.F."/>
            <person name="Chin C.W."/>
            <person name="Chung M.K."/>
            <person name="Conn L."/>
            <person name="Conway A.B."/>
            <person name="Conway A.R."/>
            <person name="Creasy T.H."/>
            <person name="Dewar K."/>
            <person name="Dunn P."/>
            <person name="Etgu P."/>
            <person name="Feldblyum T.V."/>
            <person name="Feng J.-D."/>
            <person name="Fong B."/>
            <person name="Fujii C.Y."/>
            <person name="Gill J.E."/>
            <person name="Goldsmith A.D."/>
            <person name="Haas B."/>
            <person name="Hansen N.F."/>
            <person name="Hughes B."/>
            <person name="Huizar L."/>
            <person name="Hunter J.L."/>
            <person name="Jenkins J."/>
            <person name="Johnson-Hopson C."/>
            <person name="Khan S."/>
            <person name="Khaykin E."/>
            <person name="Kim C.J."/>
            <person name="Koo H.L."/>
            <person name="Kremenetskaia I."/>
            <person name="Kurtz D.B."/>
            <person name="Kwan A."/>
            <person name="Lam B."/>
            <person name="Langin-Hooper S."/>
            <person name="Lee A."/>
            <person name="Lee J.M."/>
            <person name="Lenz C.A."/>
            <person name="Li J.H."/>
            <person name="Li Y.-P."/>
            <person name="Lin X."/>
            <person name="Liu S.X."/>
            <person name="Liu Z.A."/>
            <person name="Luros J.S."/>
            <person name="Maiti R."/>
            <person name="Marziali A."/>
            <person name="Militscher J."/>
            <person name="Miranda M."/>
            <person name="Nguyen M."/>
            <person name="Nierman W.C."/>
            <person name="Osborne B.I."/>
            <person name="Pai G."/>
            <person name="Peterson J."/>
            <person name="Pham P.K."/>
            <person name="Rizzo M."/>
            <person name="Rooney T."/>
            <person name="Rowley D."/>
            <person name="Sakano H."/>
            <person name="Salzberg S.L."/>
            <person name="Schwartz J.R."/>
            <person name="Shinn P."/>
            <person name="Southwick A.M."/>
            <person name="Sun H."/>
            <person name="Tallon L.J."/>
            <person name="Tambunga G."/>
            <person name="Toriumi M.J."/>
            <person name="Town C.D."/>
            <person name="Utterback T."/>
            <person name="Van Aken S."/>
            <person name="Vaysberg M."/>
            <person name="Vysotskaia V.S."/>
            <person name="Walker M."/>
            <person name="Wu D."/>
            <person name="Yu G."/>
            <person name="Fraser C.M."/>
            <person name="Venter J.C."/>
            <person name="Davis R.W."/>
        </authorList>
    </citation>
    <scope>NUCLEOTIDE SEQUENCE [LARGE SCALE GENOMIC DNA]</scope>
    <source>
        <strain>cv. Columbia</strain>
    </source>
</reference>
<reference key="2">
    <citation type="journal article" date="2017" name="Plant J.">
        <title>Araport11: a complete reannotation of the Arabidopsis thaliana reference genome.</title>
        <authorList>
            <person name="Cheng C.Y."/>
            <person name="Krishnakumar V."/>
            <person name="Chan A.P."/>
            <person name="Thibaud-Nissen F."/>
            <person name="Schobel S."/>
            <person name="Town C.D."/>
        </authorList>
    </citation>
    <scope>GENOME REANNOTATION</scope>
    <source>
        <strain>cv. Columbia</strain>
    </source>
</reference>
<gene>
    <name type="ordered locus">At1g32660</name>
    <name type="ORF">F6N18.5</name>
</gene>
<proteinExistence type="predicted"/>
<protein>
    <recommendedName>
        <fullName>Putative F-box protein At1g32660</fullName>
    </recommendedName>
</protein>